<name>ARGJ_NEOFI</name>
<accession>A1DF20</accession>
<protein>
    <recommendedName>
        <fullName evidence="1">Arginine biosynthesis bifunctional protein ArgJ, mitochondrial</fullName>
    </recommendedName>
    <domain>
        <recommendedName>
            <fullName evidence="1">Glutamate N-acetyltransferase</fullName>
            <shortName evidence="1">GAT</shortName>
            <ecNumber evidence="1">2.3.1.35</ecNumber>
        </recommendedName>
        <alternativeName>
            <fullName evidence="1">Ornithine acetyltransferase</fullName>
            <shortName evidence="1">OATase</shortName>
        </alternativeName>
        <alternativeName>
            <fullName evidence="1">Ornithine transacetylase</fullName>
        </alternativeName>
    </domain>
    <domain>
        <recommendedName>
            <fullName evidence="1">Amino-acid acetyltransferase</fullName>
            <ecNumber evidence="1">2.3.1.1</ecNumber>
        </recommendedName>
        <alternativeName>
            <fullName evidence="1">N-acetylglutamate synthase</fullName>
            <shortName evidence="1">AGS</shortName>
        </alternativeName>
    </domain>
    <component>
        <recommendedName>
            <fullName evidence="1">Arginine biosynthesis bifunctional protein ArgJ alpha chain</fullName>
        </recommendedName>
    </component>
    <component>
        <recommendedName>
            <fullName evidence="1">Arginine biosynthesis bifunctional protein ArgJ beta chain</fullName>
        </recommendedName>
    </component>
</protein>
<comment type="function">
    <text evidence="1">Catalyzes two activities which are involved in the cyclic version of arginine biosynthesis: the synthesis of acetylglutamate from glutamate and acetyl-CoA, and of ornithine by transacetylation between acetylornithine and glutamate.</text>
</comment>
<comment type="catalytic activity">
    <reaction evidence="1">
        <text>N(2)-acetyl-L-ornithine + L-glutamate = N-acetyl-L-glutamate + L-ornithine</text>
        <dbReference type="Rhea" id="RHEA:15349"/>
        <dbReference type="ChEBI" id="CHEBI:29985"/>
        <dbReference type="ChEBI" id="CHEBI:44337"/>
        <dbReference type="ChEBI" id="CHEBI:46911"/>
        <dbReference type="ChEBI" id="CHEBI:57805"/>
        <dbReference type="EC" id="2.3.1.35"/>
    </reaction>
</comment>
<comment type="catalytic activity">
    <reaction evidence="1">
        <text>L-glutamate + acetyl-CoA = N-acetyl-L-glutamate + CoA + H(+)</text>
        <dbReference type="Rhea" id="RHEA:24292"/>
        <dbReference type="ChEBI" id="CHEBI:15378"/>
        <dbReference type="ChEBI" id="CHEBI:29985"/>
        <dbReference type="ChEBI" id="CHEBI:44337"/>
        <dbReference type="ChEBI" id="CHEBI:57287"/>
        <dbReference type="ChEBI" id="CHEBI:57288"/>
        <dbReference type="EC" id="2.3.1.1"/>
    </reaction>
</comment>
<comment type="pathway">
    <text evidence="1">Amino-acid biosynthesis; L-arginine biosynthesis; L-ornithine and N-acetyl-L-glutamate from L-glutamate and N(2)-acetyl-L-ornithine (cyclic): step 1/1.</text>
</comment>
<comment type="pathway">
    <text evidence="1">Amino-acid biosynthesis; L-arginine biosynthesis; N(2)-acetyl-L-ornithine from L-glutamate: step 1/4.</text>
</comment>
<comment type="subunit">
    <text evidence="1">Heterodimer of an alpha and a beta chain.</text>
</comment>
<comment type="subcellular location">
    <subcellularLocation>
        <location evidence="1">Mitochondrion matrix</location>
    </subcellularLocation>
</comment>
<comment type="PTM">
    <text evidence="1">The alpha and beta chains are autoproteolytically processed from a single precursor protein within the mitochondrion.</text>
</comment>
<comment type="miscellaneous">
    <text evidence="1">This protein may be expected to contain an N-terminal transit peptide but none has been predicted.</text>
</comment>
<comment type="similarity">
    <text evidence="1">Belongs to the ArgJ family.</text>
</comment>
<evidence type="ECO:0000255" key="1">
    <source>
        <dbReference type="HAMAP-Rule" id="MF_03124"/>
    </source>
</evidence>
<proteinExistence type="inferred from homology"/>
<reference key="1">
    <citation type="journal article" date="2008" name="PLoS Genet.">
        <title>Genomic islands in the pathogenic filamentous fungus Aspergillus fumigatus.</title>
        <authorList>
            <person name="Fedorova N.D."/>
            <person name="Khaldi N."/>
            <person name="Joardar V.S."/>
            <person name="Maiti R."/>
            <person name="Amedeo P."/>
            <person name="Anderson M.J."/>
            <person name="Crabtree J."/>
            <person name="Silva J.C."/>
            <person name="Badger J.H."/>
            <person name="Albarraq A."/>
            <person name="Angiuoli S."/>
            <person name="Bussey H."/>
            <person name="Bowyer P."/>
            <person name="Cotty P.J."/>
            <person name="Dyer P.S."/>
            <person name="Egan A."/>
            <person name="Galens K."/>
            <person name="Fraser-Liggett C.M."/>
            <person name="Haas B.J."/>
            <person name="Inman J.M."/>
            <person name="Kent R."/>
            <person name="Lemieux S."/>
            <person name="Malavazi I."/>
            <person name="Orvis J."/>
            <person name="Roemer T."/>
            <person name="Ronning C.M."/>
            <person name="Sundaram J.P."/>
            <person name="Sutton G."/>
            <person name="Turner G."/>
            <person name="Venter J.C."/>
            <person name="White O.R."/>
            <person name="Whitty B.R."/>
            <person name="Youngman P."/>
            <person name="Wolfe K.H."/>
            <person name="Goldman G.H."/>
            <person name="Wortman J.R."/>
            <person name="Jiang B."/>
            <person name="Denning D.W."/>
            <person name="Nierman W.C."/>
        </authorList>
    </citation>
    <scope>NUCLEOTIDE SEQUENCE [LARGE SCALE GENOMIC DNA]</scope>
    <source>
        <strain>ATCC 1020 / DSM 3700 / CBS 544.65 / FGSC A1164 / JCM 1740 / NRRL 181 / WB 181</strain>
    </source>
</reference>
<organism>
    <name type="scientific">Neosartorya fischeri (strain ATCC 1020 / DSM 3700 / CBS 544.65 / FGSC A1164 / JCM 1740 / NRRL 181 / WB 181)</name>
    <name type="common">Aspergillus fischerianus</name>
    <dbReference type="NCBI Taxonomy" id="331117"/>
    <lineage>
        <taxon>Eukaryota</taxon>
        <taxon>Fungi</taxon>
        <taxon>Dikarya</taxon>
        <taxon>Ascomycota</taxon>
        <taxon>Pezizomycotina</taxon>
        <taxon>Eurotiomycetes</taxon>
        <taxon>Eurotiomycetidae</taxon>
        <taxon>Eurotiales</taxon>
        <taxon>Aspergillaceae</taxon>
        <taxon>Aspergillus</taxon>
        <taxon>Aspergillus subgen. Fumigati</taxon>
    </lineage>
</organism>
<feature type="chain" id="PRO_0000398070" description="Arginine biosynthesis bifunctional protein ArgJ alpha chain" evidence="1">
    <location>
        <begin position="1"/>
        <end position="223"/>
    </location>
</feature>
<feature type="chain" id="PRO_0000398071" description="Arginine biosynthesis bifunctional protein ArgJ beta chain" evidence="1">
    <location>
        <begin position="224"/>
        <end position="456"/>
    </location>
</feature>
<feature type="active site" description="Nucleophile" evidence="1">
    <location>
        <position position="224"/>
    </location>
</feature>
<feature type="binding site" evidence="1">
    <location>
        <position position="184"/>
    </location>
    <ligand>
        <name>substrate</name>
    </ligand>
</feature>
<feature type="binding site" evidence="1">
    <location>
        <position position="213"/>
    </location>
    <ligand>
        <name>substrate</name>
    </ligand>
</feature>
<feature type="binding site" evidence="1">
    <location>
        <position position="224"/>
    </location>
    <ligand>
        <name>substrate</name>
    </ligand>
</feature>
<feature type="binding site" evidence="1">
    <location>
        <position position="311"/>
    </location>
    <ligand>
        <name>substrate</name>
    </ligand>
</feature>
<feature type="binding site" evidence="1">
    <location>
        <position position="451"/>
    </location>
    <ligand>
        <name>substrate</name>
    </ligand>
</feature>
<feature type="binding site" evidence="1">
    <location>
        <position position="456"/>
    </location>
    <ligand>
        <name>substrate</name>
    </ligand>
</feature>
<feature type="site" description="Involved in the stabilization of negative charge on the oxyanion by the formation of the oxyanion hole" evidence="1">
    <location>
        <position position="145"/>
    </location>
</feature>
<feature type="site" description="Involved in the stabilization of negative charge on the oxyanion by the formation of the oxyanion hole" evidence="1">
    <location>
        <position position="146"/>
    </location>
</feature>
<feature type="site" description="Cleavage; by autolysis" evidence="1">
    <location>
        <begin position="223"/>
        <end position="224"/>
    </location>
</feature>
<sequence length="456" mass="48014">MAAFARMVKGQVRNYSAPLDMAIPASKQKYIPSSGSYPKGFLVSGTHVGVKASNTKFPDLALISSETPCSAAAVFTTNKFQAAPVQVSKKTLESRQGQGIRSVVINSGCANAVTGKGGLEDAVSMGKKVDECNGLSEPSTIVMSTGVIGQRLPISKILNKIPTAHENLASTHDAWLTTARAICTTDTFPKLLSRTFVLPSSPGRTYSLAGMTKGAGMIHPNMATLLGVLCTDAPIDPSALQSLLTHAVSRSFNSISVDGDTSTNDTVAILANGAAGGAPISSPASDDYTAMQDILTSFAQSLSQLVVRDGEGATKFVTVRVQNSPDYESARLIASTIARSPLVKTALYGRDANWGRILCAIGYTQGVAPGTVVPERTSVSFKPVDGSPVLKLLVNGEPEQVDEERASVILQEEDLEIVVDLGGGEKGEQGLGGEEAVYWFCDFSHEYVTINGDYRT</sequence>
<gene>
    <name type="ORF">NFIA_079180</name>
</gene>
<keyword id="KW-0012">Acyltransferase</keyword>
<keyword id="KW-0028">Amino-acid biosynthesis</keyword>
<keyword id="KW-0055">Arginine biosynthesis</keyword>
<keyword id="KW-0068">Autocatalytic cleavage</keyword>
<keyword id="KW-0496">Mitochondrion</keyword>
<keyword id="KW-0511">Multifunctional enzyme</keyword>
<keyword id="KW-1185">Reference proteome</keyword>
<keyword id="KW-0808">Transferase</keyword>
<dbReference type="EC" id="2.3.1.35" evidence="1"/>
<dbReference type="EC" id="2.3.1.1" evidence="1"/>
<dbReference type="EMBL" id="DS027696">
    <property type="protein sequence ID" value="EAW17977.1"/>
    <property type="molecule type" value="Genomic_DNA"/>
</dbReference>
<dbReference type="RefSeq" id="XP_001259874.1">
    <property type="nucleotide sequence ID" value="XM_001259873.1"/>
</dbReference>
<dbReference type="SMR" id="A1DF20"/>
<dbReference type="STRING" id="331117.A1DF20"/>
<dbReference type="MEROPS" id="T05.001"/>
<dbReference type="EnsemblFungi" id="EAW17977">
    <property type="protein sequence ID" value="EAW17977"/>
    <property type="gene ID" value="NFIA_079180"/>
</dbReference>
<dbReference type="GeneID" id="4586430"/>
<dbReference type="KEGG" id="nfi:NFIA_079180"/>
<dbReference type="VEuPathDB" id="FungiDB:NFIA_079180"/>
<dbReference type="eggNOG" id="KOG2786">
    <property type="taxonomic scope" value="Eukaryota"/>
</dbReference>
<dbReference type="HOGENOM" id="CLU_027172_1_0_1"/>
<dbReference type="OMA" id="WGRIVMA"/>
<dbReference type="OrthoDB" id="2017946at2759"/>
<dbReference type="UniPathway" id="UPA00068">
    <property type="reaction ID" value="UER00106"/>
</dbReference>
<dbReference type="UniPathway" id="UPA00068">
    <property type="reaction ID" value="UER00111"/>
</dbReference>
<dbReference type="Proteomes" id="UP000006702">
    <property type="component" value="Unassembled WGS sequence"/>
</dbReference>
<dbReference type="GO" id="GO:0005759">
    <property type="term" value="C:mitochondrial matrix"/>
    <property type="evidence" value="ECO:0007669"/>
    <property type="project" value="UniProtKB-SubCell"/>
</dbReference>
<dbReference type="GO" id="GO:0004358">
    <property type="term" value="F:glutamate N-acetyltransferase activity"/>
    <property type="evidence" value="ECO:0007669"/>
    <property type="project" value="UniProtKB-UniRule"/>
</dbReference>
<dbReference type="GO" id="GO:0004042">
    <property type="term" value="F:L-glutamate N-acetyltransferase activity"/>
    <property type="evidence" value="ECO:0007669"/>
    <property type="project" value="UniProtKB-UniRule"/>
</dbReference>
<dbReference type="GO" id="GO:0006526">
    <property type="term" value="P:L-arginine biosynthetic process"/>
    <property type="evidence" value="ECO:0007669"/>
    <property type="project" value="UniProtKB-UniRule"/>
</dbReference>
<dbReference type="GO" id="GO:0006592">
    <property type="term" value="P:ornithine biosynthetic process"/>
    <property type="evidence" value="ECO:0007669"/>
    <property type="project" value="EnsemblFungi"/>
</dbReference>
<dbReference type="CDD" id="cd02152">
    <property type="entry name" value="OAT"/>
    <property type="match status" value="1"/>
</dbReference>
<dbReference type="FunFam" id="3.10.20.340:FF:000002">
    <property type="entry name" value="Arginine biosynthesis bifunctional protein ArgJ, mitochondrial"/>
    <property type="match status" value="1"/>
</dbReference>
<dbReference type="FunFam" id="3.30.2330.10:FF:000001">
    <property type="entry name" value="Arginine biosynthesis bifunctional protein ArgJ, mitochondrial"/>
    <property type="match status" value="1"/>
</dbReference>
<dbReference type="FunFam" id="3.60.70.12:FF:000002">
    <property type="entry name" value="Arginine biosynthesis bifunctional protein ArgJ, mitochondrial"/>
    <property type="match status" value="1"/>
</dbReference>
<dbReference type="Gene3D" id="3.30.2330.10">
    <property type="entry name" value="arginine biosynthesis bifunctional protein suprefamily"/>
    <property type="match status" value="1"/>
</dbReference>
<dbReference type="Gene3D" id="3.10.20.340">
    <property type="entry name" value="ArgJ beta chain, C-terminal domain"/>
    <property type="match status" value="1"/>
</dbReference>
<dbReference type="Gene3D" id="3.60.70.12">
    <property type="entry name" value="L-amino peptidase D-ALA esterase/amidase"/>
    <property type="match status" value="1"/>
</dbReference>
<dbReference type="HAMAP" id="MF_01106">
    <property type="entry name" value="ArgJ"/>
    <property type="match status" value="1"/>
</dbReference>
<dbReference type="InterPro" id="IPR002813">
    <property type="entry name" value="Arg_biosynth_ArgJ"/>
</dbReference>
<dbReference type="InterPro" id="IPR016117">
    <property type="entry name" value="ArgJ-like_dom_sf"/>
</dbReference>
<dbReference type="InterPro" id="IPR042195">
    <property type="entry name" value="ArgJ_beta_C"/>
</dbReference>
<dbReference type="NCBIfam" id="TIGR00120">
    <property type="entry name" value="ArgJ"/>
    <property type="match status" value="1"/>
</dbReference>
<dbReference type="NCBIfam" id="NF003802">
    <property type="entry name" value="PRK05388.1"/>
    <property type="match status" value="1"/>
</dbReference>
<dbReference type="PANTHER" id="PTHR23100">
    <property type="entry name" value="ARGININE BIOSYNTHESIS BIFUNCTIONAL PROTEIN ARGJ"/>
    <property type="match status" value="1"/>
</dbReference>
<dbReference type="PANTHER" id="PTHR23100:SF0">
    <property type="entry name" value="ARGININE BIOSYNTHESIS BIFUNCTIONAL PROTEIN ARGJ, MITOCHONDRIAL"/>
    <property type="match status" value="1"/>
</dbReference>
<dbReference type="Pfam" id="PF01960">
    <property type="entry name" value="ArgJ"/>
    <property type="match status" value="1"/>
</dbReference>
<dbReference type="SUPFAM" id="SSF56266">
    <property type="entry name" value="DmpA/ArgJ-like"/>
    <property type="match status" value="1"/>
</dbReference>